<feature type="chain" id="PRO_0000111708" description="Ribonuclease HIII">
    <location>
        <begin position="1"/>
        <end position="296"/>
    </location>
</feature>
<feature type="domain" description="RNase H type-2" evidence="2">
    <location>
        <begin position="80"/>
        <end position="296"/>
    </location>
</feature>
<feature type="binding site" evidence="1">
    <location>
        <position position="86"/>
    </location>
    <ligand>
        <name>a divalent metal cation</name>
        <dbReference type="ChEBI" id="CHEBI:60240"/>
    </ligand>
</feature>
<feature type="binding site" evidence="1">
    <location>
        <position position="87"/>
    </location>
    <ligand>
        <name>a divalent metal cation</name>
        <dbReference type="ChEBI" id="CHEBI:60240"/>
    </ligand>
</feature>
<feature type="binding site" evidence="1">
    <location>
        <position position="191"/>
    </location>
    <ligand>
        <name>a divalent metal cation</name>
        <dbReference type="ChEBI" id="CHEBI:60240"/>
    </ligand>
</feature>
<sequence>MGTIVLKMTAEQISVLQKDLASYATATKNPYAFFSAKVDGTSVIAYTSGKVTFQGAKPEILASRFGYQAEPKQSPDGQNLALIGSDEVGNGSYFGGLAVVASLVTPADHAFLKSLGVDDSKNLNDSKIRQIAPLLEEKIPHKALLLSPRKYNEVVGDGKAHNAVSVKVALHNQAIFLLLQSGAKPDKIVIDAFISEKNYQKYFKNERNHFEFPITLEEKAEGKYLAVAVSSIIARNLFLKNLDKLSQEVGYTLPSGAGAKSDQVAAKLLQAYGDQALQTTAKYHFANTKKAYQRLK</sequence>
<accession>Q5M2P2</accession>
<protein>
    <recommendedName>
        <fullName evidence="1">Ribonuclease HIII</fullName>
        <shortName evidence="1">RNase HIII</shortName>
        <ecNumber evidence="1">3.1.26.4</ecNumber>
    </recommendedName>
</protein>
<evidence type="ECO:0000255" key="1">
    <source>
        <dbReference type="HAMAP-Rule" id="MF_00053"/>
    </source>
</evidence>
<evidence type="ECO:0000255" key="2">
    <source>
        <dbReference type="PROSITE-ProRule" id="PRU01319"/>
    </source>
</evidence>
<reference key="1">
    <citation type="journal article" date="2004" name="Nat. Biotechnol.">
        <title>Complete sequence and comparative genome analysis of the dairy bacterium Streptococcus thermophilus.</title>
        <authorList>
            <person name="Bolotin A."/>
            <person name="Quinquis B."/>
            <person name="Renault P."/>
            <person name="Sorokin A."/>
            <person name="Ehrlich S.D."/>
            <person name="Kulakauskas S."/>
            <person name="Lapidus A."/>
            <person name="Goltsman E."/>
            <person name="Mazur M."/>
            <person name="Pusch G.D."/>
            <person name="Fonstein M."/>
            <person name="Overbeek R."/>
            <person name="Kyprides N."/>
            <person name="Purnelle B."/>
            <person name="Prozzi D."/>
            <person name="Ngui K."/>
            <person name="Masuy D."/>
            <person name="Hancy F."/>
            <person name="Burteau S."/>
            <person name="Boutry M."/>
            <person name="Delcour J."/>
            <person name="Goffeau A."/>
            <person name="Hols P."/>
        </authorList>
    </citation>
    <scope>NUCLEOTIDE SEQUENCE [LARGE SCALE GENOMIC DNA]</scope>
    <source>
        <strain>ATCC BAA-250 / LMG 18311</strain>
    </source>
</reference>
<keyword id="KW-0963">Cytoplasm</keyword>
<keyword id="KW-0255">Endonuclease</keyword>
<keyword id="KW-0378">Hydrolase</keyword>
<keyword id="KW-0460">Magnesium</keyword>
<keyword id="KW-0479">Metal-binding</keyword>
<keyword id="KW-0540">Nuclease</keyword>
<keyword id="KW-1185">Reference proteome</keyword>
<name>RNH3_STRT2</name>
<comment type="function">
    <text evidence="1">Endonuclease that specifically degrades the RNA of RNA-DNA hybrids.</text>
</comment>
<comment type="catalytic activity">
    <reaction evidence="1">
        <text>Endonucleolytic cleavage to 5'-phosphomonoester.</text>
        <dbReference type="EC" id="3.1.26.4"/>
    </reaction>
</comment>
<comment type="cofactor">
    <cofactor evidence="1">
        <name>Mn(2+)</name>
        <dbReference type="ChEBI" id="CHEBI:29035"/>
    </cofactor>
    <cofactor evidence="1">
        <name>Mg(2+)</name>
        <dbReference type="ChEBI" id="CHEBI:18420"/>
    </cofactor>
    <text evidence="1">Manganese or magnesium. Binds 1 divalent metal ion per monomer in the absence of substrate. May bind a second metal ion after substrate binding.</text>
</comment>
<comment type="subcellular location">
    <subcellularLocation>
        <location evidence="1">Cytoplasm</location>
    </subcellularLocation>
</comment>
<comment type="similarity">
    <text evidence="1">Belongs to the RNase HII family. RnhC subfamily.</text>
</comment>
<organism>
    <name type="scientific">Streptococcus thermophilus (strain ATCC BAA-250 / LMG 18311)</name>
    <dbReference type="NCBI Taxonomy" id="264199"/>
    <lineage>
        <taxon>Bacteria</taxon>
        <taxon>Bacillati</taxon>
        <taxon>Bacillota</taxon>
        <taxon>Bacilli</taxon>
        <taxon>Lactobacillales</taxon>
        <taxon>Streptococcaceae</taxon>
        <taxon>Streptococcus</taxon>
    </lineage>
</organism>
<proteinExistence type="inferred from homology"/>
<gene>
    <name evidence="1" type="primary">rnhC</name>
    <name type="ordered locus">stu1765</name>
</gene>
<dbReference type="EC" id="3.1.26.4" evidence="1"/>
<dbReference type="EMBL" id="CP000023">
    <property type="protein sequence ID" value="AAV61364.1"/>
    <property type="molecule type" value="Genomic_DNA"/>
</dbReference>
<dbReference type="RefSeq" id="WP_011226557.1">
    <property type="nucleotide sequence ID" value="NC_006448.1"/>
</dbReference>
<dbReference type="SMR" id="Q5M2P2"/>
<dbReference type="STRING" id="264199.stu1765"/>
<dbReference type="KEGG" id="stl:stu1765"/>
<dbReference type="PATRIC" id="fig|264199.4.peg.1742"/>
<dbReference type="eggNOG" id="COG1039">
    <property type="taxonomic scope" value="Bacteria"/>
</dbReference>
<dbReference type="HOGENOM" id="CLU_059546_1_0_9"/>
<dbReference type="Proteomes" id="UP000001170">
    <property type="component" value="Chromosome"/>
</dbReference>
<dbReference type="GO" id="GO:0005737">
    <property type="term" value="C:cytoplasm"/>
    <property type="evidence" value="ECO:0007669"/>
    <property type="project" value="UniProtKB-SubCell"/>
</dbReference>
<dbReference type="GO" id="GO:0032299">
    <property type="term" value="C:ribonuclease H2 complex"/>
    <property type="evidence" value="ECO:0007669"/>
    <property type="project" value="TreeGrafter"/>
</dbReference>
<dbReference type="GO" id="GO:0000287">
    <property type="term" value="F:magnesium ion binding"/>
    <property type="evidence" value="ECO:0007669"/>
    <property type="project" value="UniProtKB-UniRule"/>
</dbReference>
<dbReference type="GO" id="GO:0003723">
    <property type="term" value="F:RNA binding"/>
    <property type="evidence" value="ECO:0007669"/>
    <property type="project" value="InterPro"/>
</dbReference>
<dbReference type="GO" id="GO:0004523">
    <property type="term" value="F:RNA-DNA hybrid ribonuclease activity"/>
    <property type="evidence" value="ECO:0007669"/>
    <property type="project" value="UniProtKB-UniRule"/>
</dbReference>
<dbReference type="GO" id="GO:0043137">
    <property type="term" value="P:DNA replication, removal of RNA primer"/>
    <property type="evidence" value="ECO:0007669"/>
    <property type="project" value="TreeGrafter"/>
</dbReference>
<dbReference type="GO" id="GO:0006298">
    <property type="term" value="P:mismatch repair"/>
    <property type="evidence" value="ECO:0007669"/>
    <property type="project" value="TreeGrafter"/>
</dbReference>
<dbReference type="CDD" id="cd06590">
    <property type="entry name" value="RNase_HII_bacteria_HIII_like"/>
    <property type="match status" value="1"/>
</dbReference>
<dbReference type="CDD" id="cd14796">
    <property type="entry name" value="RNAse_HIII_N"/>
    <property type="match status" value="1"/>
</dbReference>
<dbReference type="FunFam" id="3.30.420.10:FF:000047">
    <property type="entry name" value="Ribonuclease HIII"/>
    <property type="match status" value="1"/>
</dbReference>
<dbReference type="Gene3D" id="3.30.420.10">
    <property type="entry name" value="Ribonuclease H-like superfamily/Ribonuclease H"/>
    <property type="match status" value="1"/>
</dbReference>
<dbReference type="Gene3D" id="3.30.310.10">
    <property type="entry name" value="TATA-Binding Protein"/>
    <property type="match status" value="1"/>
</dbReference>
<dbReference type="HAMAP" id="MF_00053">
    <property type="entry name" value="RNase_HIII"/>
    <property type="match status" value="1"/>
</dbReference>
<dbReference type="InterPro" id="IPR001352">
    <property type="entry name" value="RNase_HII/HIII"/>
</dbReference>
<dbReference type="InterPro" id="IPR024567">
    <property type="entry name" value="RNase_HII/HIII_dom"/>
</dbReference>
<dbReference type="InterPro" id="IPR004641">
    <property type="entry name" value="RNase_HIII"/>
</dbReference>
<dbReference type="InterPro" id="IPR024568">
    <property type="entry name" value="RNase_HIII_N"/>
</dbReference>
<dbReference type="InterPro" id="IPR012337">
    <property type="entry name" value="RNaseH-like_sf"/>
</dbReference>
<dbReference type="InterPro" id="IPR036397">
    <property type="entry name" value="RNaseH_sf"/>
</dbReference>
<dbReference type="InterPro" id="IPR012295">
    <property type="entry name" value="TBP_dom_sf"/>
</dbReference>
<dbReference type="NCBIfam" id="TIGR00716">
    <property type="entry name" value="rnhC"/>
    <property type="match status" value="1"/>
</dbReference>
<dbReference type="PANTHER" id="PTHR10954:SF23">
    <property type="entry name" value="RIBONUCLEASE"/>
    <property type="match status" value="1"/>
</dbReference>
<dbReference type="PANTHER" id="PTHR10954">
    <property type="entry name" value="RIBONUCLEASE H2 SUBUNIT A"/>
    <property type="match status" value="1"/>
</dbReference>
<dbReference type="Pfam" id="PF11858">
    <property type="entry name" value="DUF3378"/>
    <property type="match status" value="1"/>
</dbReference>
<dbReference type="Pfam" id="PF01351">
    <property type="entry name" value="RNase_HII"/>
    <property type="match status" value="1"/>
</dbReference>
<dbReference type="PIRSF" id="PIRSF037748">
    <property type="entry name" value="RnhC"/>
    <property type="match status" value="1"/>
</dbReference>
<dbReference type="SUPFAM" id="SSF53098">
    <property type="entry name" value="Ribonuclease H-like"/>
    <property type="match status" value="1"/>
</dbReference>
<dbReference type="PROSITE" id="PS51975">
    <property type="entry name" value="RNASE_H_2"/>
    <property type="match status" value="1"/>
</dbReference>